<reference key="1">
    <citation type="submission" date="2007-08" db="EMBL/GenBank/DDBJ databases">
        <authorList>
            <consortium name="The Citrobacter koseri Genome Sequencing Project"/>
            <person name="McClelland M."/>
            <person name="Sanderson E.K."/>
            <person name="Porwollik S."/>
            <person name="Spieth J."/>
            <person name="Clifton W.S."/>
            <person name="Latreille P."/>
            <person name="Courtney L."/>
            <person name="Wang C."/>
            <person name="Pepin K."/>
            <person name="Bhonagiri V."/>
            <person name="Nash W."/>
            <person name="Johnson M."/>
            <person name="Thiruvilangam P."/>
            <person name="Wilson R."/>
        </authorList>
    </citation>
    <scope>NUCLEOTIDE SEQUENCE [LARGE SCALE GENOMIC DNA]</scope>
    <source>
        <strain>ATCC BAA-895 / CDC 4225-83 / SGSC4696</strain>
    </source>
</reference>
<protein>
    <recommendedName>
        <fullName evidence="1">Phosphoglucosamine mutase</fullName>
        <ecNumber evidence="1">5.4.2.10</ecNumber>
    </recommendedName>
</protein>
<comment type="function">
    <text evidence="1">Catalyzes the conversion of glucosamine-6-phosphate to glucosamine-1-phosphate.</text>
</comment>
<comment type="catalytic activity">
    <reaction evidence="1">
        <text>alpha-D-glucosamine 1-phosphate = D-glucosamine 6-phosphate</text>
        <dbReference type="Rhea" id="RHEA:23424"/>
        <dbReference type="ChEBI" id="CHEBI:58516"/>
        <dbReference type="ChEBI" id="CHEBI:58725"/>
        <dbReference type="EC" id="5.4.2.10"/>
    </reaction>
</comment>
<comment type="cofactor">
    <cofactor evidence="1">
        <name>Mg(2+)</name>
        <dbReference type="ChEBI" id="CHEBI:18420"/>
    </cofactor>
    <text evidence="1">Binds 1 Mg(2+) ion per subunit.</text>
</comment>
<comment type="PTM">
    <text evidence="1">Activated by phosphorylation.</text>
</comment>
<comment type="similarity">
    <text evidence="1">Belongs to the phosphohexose mutase family.</text>
</comment>
<sequence length="445" mass="47613">MSNRKYFGTDGIRGRVGDAPITPDFVLKLGWAAGKVLARHGSRKIIIGKDTRISGYMLESALEAGLAAAGLSASFTGPMPTPAVAYLTRTFRAEAGIVISASHNPFYDNGIKFFSIDGTKLPDEVEEAIEAEMEKEITCVDSSELGKASRIVDAAGRYIEFCKGTFPNELSLNELKIVVDCANGATYHIAPNVLRELGANVIAIGCEPNGVNINEEVGATDVRALQARVIAEKADLGIALDGDGDRVIMVDHEGNKVDGDQIMYIIAREGLRQGQLRGGAVGTLMSNMGLELALKQLGIPFARAKVGDRYVLEKLQEKGWRIGAENSGHVILLDKTTTGDGIVAGLQVLAAMVRNHMSLHDLCSGMKMFPQILVNVRYAAGSGDPLENDNVKAVTAEVEAALGNRGRVLLRKSGTEPLIRVMVEGEDEAQVTEFAHRIADAVKAV</sequence>
<gene>
    <name evidence="1" type="primary">glmM</name>
    <name type="ordered locus">CKO_04577</name>
</gene>
<keyword id="KW-0413">Isomerase</keyword>
<keyword id="KW-0460">Magnesium</keyword>
<keyword id="KW-0479">Metal-binding</keyword>
<keyword id="KW-0597">Phosphoprotein</keyword>
<keyword id="KW-1185">Reference proteome</keyword>
<feature type="chain" id="PRO_1000068898" description="Phosphoglucosamine mutase">
    <location>
        <begin position="1"/>
        <end position="445"/>
    </location>
</feature>
<feature type="active site" description="Phosphoserine intermediate" evidence="1">
    <location>
        <position position="102"/>
    </location>
</feature>
<feature type="binding site" description="via phosphate group" evidence="1">
    <location>
        <position position="102"/>
    </location>
    <ligand>
        <name>Mg(2+)</name>
        <dbReference type="ChEBI" id="CHEBI:18420"/>
    </ligand>
</feature>
<feature type="binding site" evidence="1">
    <location>
        <position position="241"/>
    </location>
    <ligand>
        <name>Mg(2+)</name>
        <dbReference type="ChEBI" id="CHEBI:18420"/>
    </ligand>
</feature>
<feature type="binding site" evidence="1">
    <location>
        <position position="243"/>
    </location>
    <ligand>
        <name>Mg(2+)</name>
        <dbReference type="ChEBI" id="CHEBI:18420"/>
    </ligand>
</feature>
<feature type="binding site" evidence="1">
    <location>
        <position position="245"/>
    </location>
    <ligand>
        <name>Mg(2+)</name>
        <dbReference type="ChEBI" id="CHEBI:18420"/>
    </ligand>
</feature>
<feature type="modified residue" description="Phosphoserine" evidence="1">
    <location>
        <position position="102"/>
    </location>
</feature>
<dbReference type="EC" id="5.4.2.10" evidence="1"/>
<dbReference type="EMBL" id="CP000822">
    <property type="protein sequence ID" value="ABV15628.1"/>
    <property type="molecule type" value="Genomic_DNA"/>
</dbReference>
<dbReference type="RefSeq" id="WP_012135308.1">
    <property type="nucleotide sequence ID" value="NC_009792.1"/>
</dbReference>
<dbReference type="SMR" id="A8AQ65"/>
<dbReference type="STRING" id="290338.CKO_04577"/>
<dbReference type="GeneID" id="45138119"/>
<dbReference type="KEGG" id="cko:CKO_04577"/>
<dbReference type="HOGENOM" id="CLU_016950_7_0_6"/>
<dbReference type="OrthoDB" id="9803322at2"/>
<dbReference type="Proteomes" id="UP000008148">
    <property type="component" value="Chromosome"/>
</dbReference>
<dbReference type="GO" id="GO:0005829">
    <property type="term" value="C:cytosol"/>
    <property type="evidence" value="ECO:0007669"/>
    <property type="project" value="TreeGrafter"/>
</dbReference>
<dbReference type="GO" id="GO:0000287">
    <property type="term" value="F:magnesium ion binding"/>
    <property type="evidence" value="ECO:0007669"/>
    <property type="project" value="UniProtKB-UniRule"/>
</dbReference>
<dbReference type="GO" id="GO:0008966">
    <property type="term" value="F:phosphoglucosamine mutase activity"/>
    <property type="evidence" value="ECO:0007669"/>
    <property type="project" value="UniProtKB-UniRule"/>
</dbReference>
<dbReference type="GO" id="GO:0004615">
    <property type="term" value="F:phosphomannomutase activity"/>
    <property type="evidence" value="ECO:0007669"/>
    <property type="project" value="TreeGrafter"/>
</dbReference>
<dbReference type="GO" id="GO:0005975">
    <property type="term" value="P:carbohydrate metabolic process"/>
    <property type="evidence" value="ECO:0007669"/>
    <property type="project" value="InterPro"/>
</dbReference>
<dbReference type="GO" id="GO:0009252">
    <property type="term" value="P:peptidoglycan biosynthetic process"/>
    <property type="evidence" value="ECO:0007669"/>
    <property type="project" value="TreeGrafter"/>
</dbReference>
<dbReference type="GO" id="GO:0006048">
    <property type="term" value="P:UDP-N-acetylglucosamine biosynthetic process"/>
    <property type="evidence" value="ECO:0007669"/>
    <property type="project" value="TreeGrafter"/>
</dbReference>
<dbReference type="CDD" id="cd05802">
    <property type="entry name" value="GlmM"/>
    <property type="match status" value="1"/>
</dbReference>
<dbReference type="FunFam" id="3.30.310.50:FF:000001">
    <property type="entry name" value="Phosphoglucosamine mutase"/>
    <property type="match status" value="1"/>
</dbReference>
<dbReference type="FunFam" id="3.40.120.10:FF:000001">
    <property type="entry name" value="Phosphoglucosamine mutase"/>
    <property type="match status" value="1"/>
</dbReference>
<dbReference type="FunFam" id="3.40.120.10:FF:000002">
    <property type="entry name" value="Phosphoglucosamine mutase"/>
    <property type="match status" value="1"/>
</dbReference>
<dbReference type="Gene3D" id="3.40.120.10">
    <property type="entry name" value="Alpha-D-Glucose-1,6-Bisphosphate, subunit A, domain 3"/>
    <property type="match status" value="3"/>
</dbReference>
<dbReference type="Gene3D" id="3.30.310.50">
    <property type="entry name" value="Alpha-D-phosphohexomutase, C-terminal domain"/>
    <property type="match status" value="1"/>
</dbReference>
<dbReference type="HAMAP" id="MF_01554_B">
    <property type="entry name" value="GlmM_B"/>
    <property type="match status" value="1"/>
</dbReference>
<dbReference type="InterPro" id="IPR005844">
    <property type="entry name" value="A-D-PHexomutase_a/b/a-I"/>
</dbReference>
<dbReference type="InterPro" id="IPR016055">
    <property type="entry name" value="A-D-PHexomutase_a/b/a-I/II/III"/>
</dbReference>
<dbReference type="InterPro" id="IPR005845">
    <property type="entry name" value="A-D-PHexomutase_a/b/a-II"/>
</dbReference>
<dbReference type="InterPro" id="IPR005846">
    <property type="entry name" value="A-D-PHexomutase_a/b/a-III"/>
</dbReference>
<dbReference type="InterPro" id="IPR005843">
    <property type="entry name" value="A-D-PHexomutase_C"/>
</dbReference>
<dbReference type="InterPro" id="IPR036900">
    <property type="entry name" value="A-D-PHexomutase_C_sf"/>
</dbReference>
<dbReference type="InterPro" id="IPR016066">
    <property type="entry name" value="A-D-PHexomutase_CS"/>
</dbReference>
<dbReference type="InterPro" id="IPR005841">
    <property type="entry name" value="Alpha-D-phosphohexomutase_SF"/>
</dbReference>
<dbReference type="InterPro" id="IPR006352">
    <property type="entry name" value="GlmM_bact"/>
</dbReference>
<dbReference type="InterPro" id="IPR050060">
    <property type="entry name" value="Phosphoglucosamine_mutase"/>
</dbReference>
<dbReference type="NCBIfam" id="TIGR01455">
    <property type="entry name" value="glmM"/>
    <property type="match status" value="1"/>
</dbReference>
<dbReference type="NCBIfam" id="NF008139">
    <property type="entry name" value="PRK10887.1"/>
    <property type="match status" value="1"/>
</dbReference>
<dbReference type="PANTHER" id="PTHR42946:SF1">
    <property type="entry name" value="PHOSPHOGLUCOMUTASE (ALPHA-D-GLUCOSE-1,6-BISPHOSPHATE-DEPENDENT)"/>
    <property type="match status" value="1"/>
</dbReference>
<dbReference type="PANTHER" id="PTHR42946">
    <property type="entry name" value="PHOSPHOHEXOSE MUTASE"/>
    <property type="match status" value="1"/>
</dbReference>
<dbReference type="Pfam" id="PF02878">
    <property type="entry name" value="PGM_PMM_I"/>
    <property type="match status" value="1"/>
</dbReference>
<dbReference type="Pfam" id="PF02879">
    <property type="entry name" value="PGM_PMM_II"/>
    <property type="match status" value="1"/>
</dbReference>
<dbReference type="Pfam" id="PF02880">
    <property type="entry name" value="PGM_PMM_III"/>
    <property type="match status" value="1"/>
</dbReference>
<dbReference type="Pfam" id="PF00408">
    <property type="entry name" value="PGM_PMM_IV"/>
    <property type="match status" value="1"/>
</dbReference>
<dbReference type="PRINTS" id="PR00509">
    <property type="entry name" value="PGMPMM"/>
</dbReference>
<dbReference type="SUPFAM" id="SSF55957">
    <property type="entry name" value="Phosphoglucomutase, C-terminal domain"/>
    <property type="match status" value="1"/>
</dbReference>
<dbReference type="SUPFAM" id="SSF53738">
    <property type="entry name" value="Phosphoglucomutase, first 3 domains"/>
    <property type="match status" value="3"/>
</dbReference>
<dbReference type="PROSITE" id="PS00710">
    <property type="entry name" value="PGM_PMM"/>
    <property type="match status" value="1"/>
</dbReference>
<name>GLMM_CITK8</name>
<evidence type="ECO:0000255" key="1">
    <source>
        <dbReference type="HAMAP-Rule" id="MF_01554"/>
    </source>
</evidence>
<organism>
    <name type="scientific">Citrobacter koseri (strain ATCC BAA-895 / CDC 4225-83 / SGSC4696)</name>
    <dbReference type="NCBI Taxonomy" id="290338"/>
    <lineage>
        <taxon>Bacteria</taxon>
        <taxon>Pseudomonadati</taxon>
        <taxon>Pseudomonadota</taxon>
        <taxon>Gammaproteobacteria</taxon>
        <taxon>Enterobacterales</taxon>
        <taxon>Enterobacteriaceae</taxon>
        <taxon>Citrobacter</taxon>
    </lineage>
</organism>
<proteinExistence type="inferred from homology"/>
<accession>A8AQ65</accession>